<proteinExistence type="inferred from homology"/>
<protein>
    <recommendedName>
        <fullName evidence="1">Putative double-stranded DNA mimic protein VC_1208</fullName>
    </recommendedName>
</protein>
<evidence type="ECO:0000255" key="1">
    <source>
        <dbReference type="HAMAP-Rule" id="MF_00680"/>
    </source>
</evidence>
<dbReference type="EMBL" id="AE003852">
    <property type="protein sequence ID" value="AAF94367.1"/>
    <property type="molecule type" value="Genomic_DNA"/>
</dbReference>
<dbReference type="PIR" id="C82229">
    <property type="entry name" value="C82229"/>
</dbReference>
<dbReference type="RefSeq" id="NP_230853.1">
    <property type="nucleotide sequence ID" value="NC_002505.1"/>
</dbReference>
<dbReference type="RefSeq" id="WP_000818869.1">
    <property type="nucleotide sequence ID" value="NZ_LT906614.1"/>
</dbReference>
<dbReference type="SMR" id="Q9KSP8"/>
<dbReference type="STRING" id="243277.VC_1208"/>
<dbReference type="DNASU" id="2614641"/>
<dbReference type="EnsemblBacteria" id="AAF94367">
    <property type="protein sequence ID" value="AAF94367"/>
    <property type="gene ID" value="VC_1208"/>
</dbReference>
<dbReference type="KEGG" id="vch:VC_1208"/>
<dbReference type="PATRIC" id="fig|243277.26.peg.1155"/>
<dbReference type="eggNOG" id="COG3099">
    <property type="taxonomic scope" value="Bacteria"/>
</dbReference>
<dbReference type="HOGENOM" id="CLU_143392_0_0_6"/>
<dbReference type="Proteomes" id="UP000000584">
    <property type="component" value="Chromosome 1"/>
</dbReference>
<dbReference type="Gene3D" id="3.10.450.140">
    <property type="entry name" value="dsDNA mimic, putative"/>
    <property type="match status" value="1"/>
</dbReference>
<dbReference type="HAMAP" id="MF_00680">
    <property type="entry name" value="Put_dsDNA_mimic"/>
    <property type="match status" value="1"/>
</dbReference>
<dbReference type="InterPro" id="IPR007376">
    <property type="entry name" value="dsDNA_mimic_put"/>
</dbReference>
<dbReference type="InterPro" id="IPR036763">
    <property type="entry name" value="Put_dsDNA_mimic_sf"/>
</dbReference>
<dbReference type="NCBIfam" id="NF003469">
    <property type="entry name" value="PRK05094.1"/>
    <property type="match status" value="1"/>
</dbReference>
<dbReference type="Pfam" id="PF04269">
    <property type="entry name" value="DUF440"/>
    <property type="match status" value="1"/>
</dbReference>
<dbReference type="PIRSF" id="PIRSF004916">
    <property type="entry name" value="UCP004916"/>
    <property type="match status" value="1"/>
</dbReference>
<dbReference type="SUPFAM" id="SSF102816">
    <property type="entry name" value="Putative dsDNA mimic"/>
    <property type="match status" value="1"/>
</dbReference>
<sequence length="106" mass="12174">MAELISIDDTIDTAYDIFLEMAPDNLEPADVILFTAQFDDRGAAELVDVGDDWDDQVGFEVDKEIYAEVRIGLVNEENDVLDDVFARMLISRDPDQKFCHMLWKRD</sequence>
<comment type="function">
    <text evidence="1">May act as a double-stranded DNA (dsDNA) mimic. Probably regulates the activity of a dsDNA-binding protein.</text>
</comment>
<comment type="similarity">
    <text evidence="1">Belongs to the putative dsDNA mimic protein family.</text>
</comment>
<name>Y1208_VIBCH</name>
<accession>Q9KSP8</accession>
<keyword id="KW-1185">Reference proteome</keyword>
<reference key="1">
    <citation type="journal article" date="2000" name="Nature">
        <title>DNA sequence of both chromosomes of the cholera pathogen Vibrio cholerae.</title>
        <authorList>
            <person name="Heidelberg J.F."/>
            <person name="Eisen J.A."/>
            <person name="Nelson W.C."/>
            <person name="Clayton R.A."/>
            <person name="Gwinn M.L."/>
            <person name="Dodson R.J."/>
            <person name="Haft D.H."/>
            <person name="Hickey E.K."/>
            <person name="Peterson J.D."/>
            <person name="Umayam L.A."/>
            <person name="Gill S.R."/>
            <person name="Nelson K.E."/>
            <person name="Read T.D."/>
            <person name="Tettelin H."/>
            <person name="Richardson D.L."/>
            <person name="Ermolaeva M.D."/>
            <person name="Vamathevan J.J."/>
            <person name="Bass S."/>
            <person name="Qin H."/>
            <person name="Dragoi I."/>
            <person name="Sellers P."/>
            <person name="McDonald L.A."/>
            <person name="Utterback T.R."/>
            <person name="Fleischmann R.D."/>
            <person name="Nierman W.C."/>
            <person name="White O."/>
            <person name="Salzberg S.L."/>
            <person name="Smith H.O."/>
            <person name="Colwell R.R."/>
            <person name="Mekalanos J.J."/>
            <person name="Venter J.C."/>
            <person name="Fraser C.M."/>
        </authorList>
    </citation>
    <scope>NUCLEOTIDE SEQUENCE [LARGE SCALE GENOMIC DNA]</scope>
    <source>
        <strain>ATCC 39315 / El Tor Inaba N16961</strain>
    </source>
</reference>
<gene>
    <name type="ordered locus">VC_1208</name>
</gene>
<feature type="chain" id="PRO_0000072785" description="Putative double-stranded DNA mimic protein VC_1208">
    <location>
        <begin position="1"/>
        <end position="106"/>
    </location>
</feature>
<organism>
    <name type="scientific">Vibrio cholerae serotype O1 (strain ATCC 39315 / El Tor Inaba N16961)</name>
    <dbReference type="NCBI Taxonomy" id="243277"/>
    <lineage>
        <taxon>Bacteria</taxon>
        <taxon>Pseudomonadati</taxon>
        <taxon>Pseudomonadota</taxon>
        <taxon>Gammaproteobacteria</taxon>
        <taxon>Vibrionales</taxon>
        <taxon>Vibrionaceae</taxon>
        <taxon>Vibrio</taxon>
    </lineage>
</organism>